<sequence>MDQVYNIVMAYILTLIISPLYSYLIGSLNASIILSLVFKKQDVRLFASKNAGMTNMIRVHGKKLGILTLFLDIIKPITTVSLTYIIYKYALDAPFDLSNGFNQAILVYFGGIFTIIGHCYPIFFKFQGGKGVACYGGFLITVDPIVALIGIITLLVILLITKYMSLSAMITATFTCFLVLVPGINYIPYYNQNFTTYFFDLNYVIKGIWYVWFFLLVSASLLIYRHKTNILSIATKQERKTILFHTKSKDNLSDVNK</sequence>
<name>PLSY_UREP2</name>
<evidence type="ECO:0000255" key="1">
    <source>
        <dbReference type="HAMAP-Rule" id="MF_01043"/>
    </source>
</evidence>
<comment type="function">
    <text evidence="1">Catalyzes the transfer of an acyl group from acyl-phosphate (acyl-PO(4)) to glycerol-3-phosphate (G3P) to form lysophosphatidic acid (LPA). This enzyme utilizes acyl-phosphate as fatty acyl donor, but not acyl-CoA or acyl-ACP.</text>
</comment>
<comment type="catalytic activity">
    <reaction evidence="1">
        <text>an acyl phosphate + sn-glycerol 3-phosphate = a 1-acyl-sn-glycero-3-phosphate + phosphate</text>
        <dbReference type="Rhea" id="RHEA:34075"/>
        <dbReference type="ChEBI" id="CHEBI:43474"/>
        <dbReference type="ChEBI" id="CHEBI:57597"/>
        <dbReference type="ChEBI" id="CHEBI:57970"/>
        <dbReference type="ChEBI" id="CHEBI:59918"/>
        <dbReference type="EC" id="2.3.1.275"/>
    </reaction>
</comment>
<comment type="pathway">
    <text evidence="1">Lipid metabolism; phospholipid metabolism.</text>
</comment>
<comment type="subunit">
    <text evidence="1">Probably interacts with PlsX.</text>
</comment>
<comment type="subcellular location">
    <subcellularLocation>
        <location evidence="1">Cell membrane</location>
        <topology evidence="1">Multi-pass membrane protein</topology>
    </subcellularLocation>
</comment>
<comment type="similarity">
    <text evidence="1">Belongs to the PlsY family.</text>
</comment>
<dbReference type="EC" id="2.3.1.275" evidence="1"/>
<dbReference type="EMBL" id="CP000942">
    <property type="protein sequence ID" value="ACA32914.1"/>
    <property type="molecule type" value="Genomic_DNA"/>
</dbReference>
<dbReference type="RefSeq" id="WP_006688736.1">
    <property type="nucleotide sequence ID" value="NC_010503.1"/>
</dbReference>
<dbReference type="SMR" id="B1AJ44"/>
<dbReference type="GeneID" id="29672333"/>
<dbReference type="KEGG" id="upa:UPA3_0421"/>
<dbReference type="HOGENOM" id="CLU_081254_3_0_14"/>
<dbReference type="UniPathway" id="UPA00085"/>
<dbReference type="Proteomes" id="UP000002162">
    <property type="component" value="Chromosome"/>
</dbReference>
<dbReference type="GO" id="GO:0005886">
    <property type="term" value="C:plasma membrane"/>
    <property type="evidence" value="ECO:0007669"/>
    <property type="project" value="UniProtKB-SubCell"/>
</dbReference>
<dbReference type="GO" id="GO:0043772">
    <property type="term" value="F:acyl-phosphate glycerol-3-phosphate acyltransferase activity"/>
    <property type="evidence" value="ECO:0007669"/>
    <property type="project" value="UniProtKB-UniRule"/>
</dbReference>
<dbReference type="GO" id="GO:0008654">
    <property type="term" value="P:phospholipid biosynthetic process"/>
    <property type="evidence" value="ECO:0007669"/>
    <property type="project" value="UniProtKB-UniRule"/>
</dbReference>
<dbReference type="HAMAP" id="MF_01043">
    <property type="entry name" value="PlsY"/>
    <property type="match status" value="1"/>
</dbReference>
<dbReference type="InterPro" id="IPR003811">
    <property type="entry name" value="G3P_acylTferase_PlsY"/>
</dbReference>
<dbReference type="NCBIfam" id="TIGR00023">
    <property type="entry name" value="glycerol-3-phosphate 1-O-acyltransferase PlsY"/>
    <property type="match status" value="1"/>
</dbReference>
<dbReference type="PANTHER" id="PTHR30309:SF0">
    <property type="entry name" value="GLYCEROL-3-PHOSPHATE ACYLTRANSFERASE-RELATED"/>
    <property type="match status" value="1"/>
</dbReference>
<dbReference type="PANTHER" id="PTHR30309">
    <property type="entry name" value="INNER MEMBRANE PROTEIN YGIH"/>
    <property type="match status" value="1"/>
</dbReference>
<dbReference type="Pfam" id="PF02660">
    <property type="entry name" value="G3P_acyltransf"/>
    <property type="match status" value="1"/>
</dbReference>
<dbReference type="SMART" id="SM01207">
    <property type="entry name" value="G3P_acyltransf"/>
    <property type="match status" value="1"/>
</dbReference>
<organism>
    <name type="scientific">Ureaplasma parvum serovar 3 (strain ATCC 27815 / 27 / NCTC 11736)</name>
    <dbReference type="NCBI Taxonomy" id="505682"/>
    <lineage>
        <taxon>Bacteria</taxon>
        <taxon>Bacillati</taxon>
        <taxon>Mycoplasmatota</taxon>
        <taxon>Mycoplasmoidales</taxon>
        <taxon>Mycoplasmoidaceae</taxon>
        <taxon>Ureaplasma</taxon>
    </lineage>
</organism>
<proteinExistence type="inferred from homology"/>
<accession>B1AJ44</accession>
<reference key="1">
    <citation type="submission" date="2008-02" db="EMBL/GenBank/DDBJ databases">
        <title>Genome sequence of Ureaplasma parvum serovar 3.</title>
        <authorList>
            <person name="Methe B.A."/>
            <person name="Glass J."/>
            <person name="Waites K."/>
            <person name="Shrivastava S."/>
        </authorList>
    </citation>
    <scope>NUCLEOTIDE SEQUENCE [LARGE SCALE GENOMIC DNA]</scope>
    <source>
        <strain>ATCC 27815 / 27 / NCTC 11736</strain>
    </source>
</reference>
<keyword id="KW-1003">Cell membrane</keyword>
<keyword id="KW-0444">Lipid biosynthesis</keyword>
<keyword id="KW-0443">Lipid metabolism</keyword>
<keyword id="KW-0472">Membrane</keyword>
<keyword id="KW-0594">Phospholipid biosynthesis</keyword>
<keyword id="KW-1208">Phospholipid metabolism</keyword>
<keyword id="KW-0808">Transferase</keyword>
<keyword id="KW-0812">Transmembrane</keyword>
<keyword id="KW-1133">Transmembrane helix</keyword>
<feature type="chain" id="PRO_1000084402" description="Glycerol-3-phosphate acyltransferase">
    <location>
        <begin position="1"/>
        <end position="257"/>
    </location>
</feature>
<feature type="transmembrane region" description="Helical" evidence="1">
    <location>
        <begin position="7"/>
        <end position="27"/>
    </location>
</feature>
<feature type="transmembrane region" description="Helical" evidence="1">
    <location>
        <begin position="66"/>
        <end position="86"/>
    </location>
</feature>
<feature type="transmembrane region" description="Helical" evidence="1">
    <location>
        <begin position="104"/>
        <end position="124"/>
    </location>
</feature>
<feature type="transmembrane region" description="Helical" evidence="1">
    <location>
        <begin position="140"/>
        <end position="160"/>
    </location>
</feature>
<feature type="transmembrane region" description="Helical" evidence="1">
    <location>
        <begin position="164"/>
        <end position="184"/>
    </location>
</feature>
<feature type="transmembrane region" description="Helical" evidence="1">
    <location>
        <begin position="203"/>
        <end position="223"/>
    </location>
</feature>
<protein>
    <recommendedName>
        <fullName evidence="1">Glycerol-3-phosphate acyltransferase</fullName>
    </recommendedName>
    <alternativeName>
        <fullName evidence="1">Acyl-PO4 G3P acyltransferase</fullName>
    </alternativeName>
    <alternativeName>
        <fullName evidence="1">Acyl-phosphate--glycerol-3-phosphate acyltransferase</fullName>
    </alternativeName>
    <alternativeName>
        <fullName evidence="1">G3P acyltransferase</fullName>
        <shortName evidence="1">GPAT</shortName>
        <ecNumber evidence="1">2.3.1.275</ecNumber>
    </alternativeName>
    <alternativeName>
        <fullName evidence="1">Lysophosphatidic acid synthase</fullName>
        <shortName evidence="1">LPA synthase</shortName>
    </alternativeName>
</protein>
<gene>
    <name evidence="1" type="primary">plsY</name>
    <name type="ordered locus">UPA3_0421</name>
</gene>